<feature type="chain" id="PRO_0000123264" description="Small ribosomal subunit protein uS11">
    <location>
        <begin position="1"/>
        <end position="129"/>
    </location>
</feature>
<organism>
    <name type="scientific">Yersinia pseudotuberculosis serotype I (strain IP32953)</name>
    <dbReference type="NCBI Taxonomy" id="273123"/>
    <lineage>
        <taxon>Bacteria</taxon>
        <taxon>Pseudomonadati</taxon>
        <taxon>Pseudomonadota</taxon>
        <taxon>Gammaproteobacteria</taxon>
        <taxon>Enterobacterales</taxon>
        <taxon>Yersiniaceae</taxon>
        <taxon>Yersinia</taxon>
    </lineage>
</organism>
<sequence>MAKAPIRARKRVRKTVSDGVAHIHASFNNTIVTITDRQGNALGWATAGGSGFRGSRKSTPFAAQVAAERCAEAVKEYGIKNLEVMVKGPGPGRESTIRALNAAGFRITNITDVTPIPHNGCRPPKKRRV</sequence>
<reference key="1">
    <citation type="journal article" date="2004" name="Proc. Natl. Acad. Sci. U.S.A.">
        <title>Insights into the evolution of Yersinia pestis through whole-genome comparison with Yersinia pseudotuberculosis.</title>
        <authorList>
            <person name="Chain P.S.G."/>
            <person name="Carniel E."/>
            <person name="Larimer F.W."/>
            <person name="Lamerdin J."/>
            <person name="Stoutland P.O."/>
            <person name="Regala W.M."/>
            <person name="Georgescu A.M."/>
            <person name="Vergez L.M."/>
            <person name="Land M.L."/>
            <person name="Motin V.L."/>
            <person name="Brubaker R.R."/>
            <person name="Fowler J."/>
            <person name="Hinnebusch J."/>
            <person name="Marceau M."/>
            <person name="Medigue C."/>
            <person name="Simonet M."/>
            <person name="Chenal-Francisque V."/>
            <person name="Souza B."/>
            <person name="Dacheux D."/>
            <person name="Elliott J.M."/>
            <person name="Derbise A."/>
            <person name="Hauser L.J."/>
            <person name="Garcia E."/>
        </authorList>
    </citation>
    <scope>NUCLEOTIDE SEQUENCE [LARGE SCALE GENOMIC DNA]</scope>
    <source>
        <strain>IP32953</strain>
    </source>
</reference>
<gene>
    <name evidence="1" type="primary">rpsK</name>
    <name type="ordered locus">YPTB3675</name>
</gene>
<name>RS11_YERPS</name>
<accession>Q664U4</accession>
<comment type="function">
    <text evidence="1">Located on the platform of the 30S subunit, it bridges several disparate RNA helices of the 16S rRNA. Forms part of the Shine-Dalgarno cleft in the 70S ribosome.</text>
</comment>
<comment type="subunit">
    <text evidence="1">Part of the 30S ribosomal subunit. Interacts with proteins S7 and S18. Binds to IF-3.</text>
</comment>
<comment type="similarity">
    <text evidence="1">Belongs to the universal ribosomal protein uS11 family.</text>
</comment>
<proteinExistence type="inferred from homology"/>
<keyword id="KW-0687">Ribonucleoprotein</keyword>
<keyword id="KW-0689">Ribosomal protein</keyword>
<keyword id="KW-0694">RNA-binding</keyword>
<keyword id="KW-0699">rRNA-binding</keyword>
<protein>
    <recommendedName>
        <fullName evidence="1">Small ribosomal subunit protein uS11</fullName>
    </recommendedName>
    <alternativeName>
        <fullName evidence="2">30S ribosomal protein S11</fullName>
    </alternativeName>
</protein>
<evidence type="ECO:0000255" key="1">
    <source>
        <dbReference type="HAMAP-Rule" id="MF_01310"/>
    </source>
</evidence>
<evidence type="ECO:0000305" key="2"/>
<dbReference type="EMBL" id="BX936398">
    <property type="protein sequence ID" value="CAH22913.1"/>
    <property type="molecule type" value="Genomic_DNA"/>
</dbReference>
<dbReference type="RefSeq" id="WP_002218948.1">
    <property type="nucleotide sequence ID" value="NZ_CP009712.1"/>
</dbReference>
<dbReference type="SMR" id="Q664U4"/>
<dbReference type="GeneID" id="96663173"/>
<dbReference type="KEGG" id="ypo:BZ17_2912"/>
<dbReference type="KEGG" id="yps:YPTB3675"/>
<dbReference type="PATRIC" id="fig|273123.14.peg.3053"/>
<dbReference type="Proteomes" id="UP000001011">
    <property type="component" value="Chromosome"/>
</dbReference>
<dbReference type="GO" id="GO:1990904">
    <property type="term" value="C:ribonucleoprotein complex"/>
    <property type="evidence" value="ECO:0007669"/>
    <property type="project" value="UniProtKB-KW"/>
</dbReference>
<dbReference type="GO" id="GO:0005840">
    <property type="term" value="C:ribosome"/>
    <property type="evidence" value="ECO:0007669"/>
    <property type="project" value="UniProtKB-KW"/>
</dbReference>
<dbReference type="GO" id="GO:0019843">
    <property type="term" value="F:rRNA binding"/>
    <property type="evidence" value="ECO:0007669"/>
    <property type="project" value="UniProtKB-UniRule"/>
</dbReference>
<dbReference type="GO" id="GO:0003735">
    <property type="term" value="F:structural constituent of ribosome"/>
    <property type="evidence" value="ECO:0007669"/>
    <property type="project" value="InterPro"/>
</dbReference>
<dbReference type="GO" id="GO:0006412">
    <property type="term" value="P:translation"/>
    <property type="evidence" value="ECO:0007669"/>
    <property type="project" value="UniProtKB-UniRule"/>
</dbReference>
<dbReference type="FunFam" id="3.30.420.80:FF:000001">
    <property type="entry name" value="30S ribosomal protein S11"/>
    <property type="match status" value="1"/>
</dbReference>
<dbReference type="Gene3D" id="3.30.420.80">
    <property type="entry name" value="Ribosomal protein S11"/>
    <property type="match status" value="1"/>
</dbReference>
<dbReference type="HAMAP" id="MF_01310">
    <property type="entry name" value="Ribosomal_uS11"/>
    <property type="match status" value="1"/>
</dbReference>
<dbReference type="InterPro" id="IPR001971">
    <property type="entry name" value="Ribosomal_uS11"/>
</dbReference>
<dbReference type="InterPro" id="IPR019981">
    <property type="entry name" value="Ribosomal_uS11_bac-type"/>
</dbReference>
<dbReference type="InterPro" id="IPR018102">
    <property type="entry name" value="Ribosomal_uS11_CS"/>
</dbReference>
<dbReference type="InterPro" id="IPR036967">
    <property type="entry name" value="Ribosomal_uS11_sf"/>
</dbReference>
<dbReference type="NCBIfam" id="NF003698">
    <property type="entry name" value="PRK05309.1"/>
    <property type="match status" value="1"/>
</dbReference>
<dbReference type="NCBIfam" id="TIGR03632">
    <property type="entry name" value="uS11_bact"/>
    <property type="match status" value="1"/>
</dbReference>
<dbReference type="PANTHER" id="PTHR11759">
    <property type="entry name" value="40S RIBOSOMAL PROTEIN S14/30S RIBOSOMAL PROTEIN S11"/>
    <property type="match status" value="1"/>
</dbReference>
<dbReference type="Pfam" id="PF00411">
    <property type="entry name" value="Ribosomal_S11"/>
    <property type="match status" value="1"/>
</dbReference>
<dbReference type="PIRSF" id="PIRSF002131">
    <property type="entry name" value="Ribosomal_S11"/>
    <property type="match status" value="1"/>
</dbReference>
<dbReference type="SUPFAM" id="SSF53137">
    <property type="entry name" value="Translational machinery components"/>
    <property type="match status" value="1"/>
</dbReference>
<dbReference type="PROSITE" id="PS00054">
    <property type="entry name" value="RIBOSOMAL_S11"/>
    <property type="match status" value="1"/>
</dbReference>